<comment type="function">
    <text evidence="1 7">Catalyzes the NADPH-dependent reduction of succinic semialdehyde to gamma-hydroxybutyrate. May have an important role in producing the neuromodulator gamma-hydroxybutyrate (GHB). Has broad substrate specificity. Can reduce the dialdehyde protein-binding form of aflatoxin B1 (AFB1) to the non-binding AFB1 dialcohol. May be involved in protection of liver against the toxic and carcinogenic effects of AFB1, a potent hepatocarcinogen (By similarity).</text>
</comment>
<comment type="catalytic activity">
    <reaction evidence="7">
        <text>4-hydroxybutanoate + NADP(+) = succinate semialdehyde + NADPH + H(+)</text>
        <dbReference type="Rhea" id="RHEA:26381"/>
        <dbReference type="ChEBI" id="CHEBI:15378"/>
        <dbReference type="ChEBI" id="CHEBI:16724"/>
        <dbReference type="ChEBI" id="CHEBI:57706"/>
        <dbReference type="ChEBI" id="CHEBI:57783"/>
        <dbReference type="ChEBI" id="CHEBI:58349"/>
        <dbReference type="EC" id="1.1.1.n11"/>
    </reaction>
</comment>
<comment type="activity regulation">
    <text evidence="7">Inhibited by citrate, succinate and tartrate.</text>
</comment>
<comment type="biophysicochemical properties">
    <kinetics>
        <KM evidence="7">19.8 uM for succinic semialdehyde</KM>
    </kinetics>
</comment>
<comment type="subunit">
    <text evidence="7">Homodimer.</text>
</comment>
<comment type="subcellular location">
    <subcellularLocation>
        <location evidence="4">Mitochondrion</location>
    </subcellularLocation>
    <subcellularLocation>
        <location evidence="3">Golgi apparatus</location>
    </subcellularLocation>
    <subcellularLocation>
        <location evidence="2">Cytoplasm</location>
    </subcellularLocation>
</comment>
<comment type="tissue specificity">
    <text evidence="6">Expressed in liver, kidney, testis and brain with low levels in skeletal muscle, spleen, heart and lung.</text>
</comment>
<comment type="similarity">
    <text evidence="8">Belongs to the aldo/keto reductase family. Aldo/keto reductase 2 subfamily.</text>
</comment>
<comment type="sequence caution" evidence="8">
    <conflict type="erroneous initiation">
        <sequence resource="EMBL-CDS" id="AAH31857"/>
    </conflict>
</comment>
<comment type="sequence caution" evidence="8">
    <conflict type="erroneous initiation">
        <sequence resource="EMBL-CDS" id="CAC81077"/>
    </conflict>
</comment>
<comment type="sequence caution" evidence="8">
    <conflict type="erroneous initiation">
        <sequence resource="EMBL-CDS" id="CAC81078"/>
    </conflict>
</comment>
<sequence>MLRAASRAVGRAAVRSAQRSGTSVGRPLAMSRPPPPRAASGAPLRPATVLGTMEMGRRMDASASAASVRAFLERGHSELDTAFMYCDGQSENILGGLGLGLGSGDCTVKIATKANPWEGKSLKPDSIRSQLETSLKRLQCPRVDLFYLHAPDHSTPVEETLRACHQLHQEGKFVELGLSNYASWEVAEICTLCKSNGWILPTVYQGMYNATTRQVEAELLPCLRHFGLRFYAYNPLAGGLLTGKYKYEDKDGKQPVGRFFGNNWAETYRNRFWKEHHFEAIALVEKALQTTYGTNAPRMTSAALRWMYHHSQLQGTRGDAVILGMSSLEQLEQNLAATEEGPLEPAVVEAFDQAWNMVAHECPNYFR</sequence>
<name>ARK72_MOUSE</name>
<gene>
    <name evidence="2" type="primary">Akr7a2</name>
    <name evidence="12" type="synonym">Afar</name>
    <name evidence="12" type="synonym">Akr7a5</name>
</gene>
<feature type="transit peptide" description="Mitochondrion" evidence="4">
    <location>
        <begin position="1"/>
        <end position="46"/>
    </location>
</feature>
<feature type="chain" id="PRO_0000070376" description="Aflatoxin B1 aldehyde reductase member 2">
    <location>
        <begin position="47"/>
        <end position="367"/>
    </location>
</feature>
<feature type="region of interest" description="Disordered" evidence="5">
    <location>
        <begin position="1"/>
        <end position="45"/>
    </location>
</feature>
<feature type="compositionally biased region" description="Low complexity" evidence="5">
    <location>
        <begin position="1"/>
        <end position="31"/>
    </location>
</feature>
<feature type="active site" description="Proton donor" evidence="7">
    <location>
        <position position="85"/>
    </location>
</feature>
<feature type="binding site" evidence="7">
    <location>
        <position position="80"/>
    </location>
    <ligand>
        <name>NADP(+)</name>
        <dbReference type="ChEBI" id="CHEBI:58349"/>
    </ligand>
</feature>
<feature type="binding site" evidence="7">
    <location>
        <position position="149"/>
    </location>
    <ligand>
        <name>substrate</name>
    </ligand>
</feature>
<feature type="binding site" evidence="7">
    <location>
        <begin position="179"/>
        <end position="180"/>
    </location>
    <ligand>
        <name>NADP(+)</name>
        <dbReference type="ChEBI" id="CHEBI:58349"/>
    </ligand>
</feature>
<feature type="binding site" evidence="7">
    <location>
        <position position="205"/>
    </location>
    <ligand>
        <name>NADP(+)</name>
        <dbReference type="ChEBI" id="CHEBI:58349"/>
    </ligand>
</feature>
<feature type="binding site" evidence="7">
    <location>
        <begin position="234"/>
        <end position="244"/>
    </location>
    <ligand>
        <name>NADP(+)</name>
        <dbReference type="ChEBI" id="CHEBI:58349"/>
    </ligand>
</feature>
<feature type="binding site" evidence="7">
    <location>
        <position position="258"/>
    </location>
    <ligand>
        <name>NADP(+)</name>
        <dbReference type="ChEBI" id="CHEBI:58349"/>
    </ligand>
</feature>
<feature type="binding site" evidence="7">
    <location>
        <position position="268"/>
    </location>
    <ligand>
        <name>substrate</name>
    </ligand>
</feature>
<feature type="binding site" evidence="7">
    <location>
        <position position="271"/>
    </location>
    <ligand>
        <name>substrate</name>
    </ligand>
</feature>
<feature type="binding site" evidence="7">
    <location>
        <begin position="326"/>
        <end position="334"/>
    </location>
    <ligand>
        <name>NADP(+)</name>
        <dbReference type="ChEBI" id="CHEBI:58349"/>
    </ligand>
</feature>
<feature type="binding site" evidence="7">
    <location>
        <position position="367"/>
    </location>
    <ligand>
        <name>substrate</name>
    </ligand>
</feature>
<feature type="site" description="Lowers pKa of active site Tyr" evidence="2">
    <location>
        <position position="113"/>
    </location>
</feature>
<feature type="modified residue" description="Phosphoserine" evidence="13">
    <location>
        <position position="40"/>
    </location>
</feature>
<feature type="modified residue" description="Phosphothreonine" evidence="13">
    <location>
        <position position="48"/>
    </location>
</feature>
<feature type="modified residue" description="N6-acetyllysine" evidence="14">
    <location>
        <position position="136"/>
    </location>
</feature>
<feature type="modified residue" description="N6-succinyllysine" evidence="15">
    <location>
        <position position="244"/>
    </location>
</feature>
<feature type="sequence conflict" description="In Ref. 1; BAE25302." evidence="8" ref="1">
    <original>A</original>
    <variation>G</variation>
    <location>
        <position position="5"/>
    </location>
</feature>
<feature type="sequence conflict" description="In Ref. 1; BAE25302." evidence="8" ref="1">
    <original>V</original>
    <variation>G</variation>
    <location>
        <position position="9"/>
    </location>
</feature>
<feature type="sequence conflict" description="In Ref. 1; BAE25302." evidence="8" ref="1">
    <original>A</original>
    <variation>V</variation>
    <location>
        <position position="12"/>
    </location>
</feature>
<feature type="sequence conflict" description="In Ref. 1; BAE25302." evidence="8" ref="1">
    <original>A</original>
    <variation>G</variation>
    <location>
        <position position="17"/>
    </location>
</feature>
<feature type="sequence conflict" description="In Ref. 3; AAH31857 and 4; CAC81078." evidence="8" ref="3 4">
    <original>I</original>
    <variation>V</variation>
    <location>
        <position position="127"/>
    </location>
</feature>
<feature type="sequence conflict" description="In Ref. 5; AAO38437." evidence="8" ref="5">
    <original>R</original>
    <variation>C</variation>
    <location>
        <position position="162"/>
    </location>
</feature>
<feature type="sequence conflict" description="In Ref. 3; AAH31857." evidence="8" ref="3">
    <original>A</original>
    <variation>G</variation>
    <location>
        <position position="354"/>
    </location>
</feature>
<feature type="strand" evidence="16">
    <location>
        <begin position="47"/>
        <end position="51"/>
    </location>
</feature>
<feature type="turn" evidence="16">
    <location>
        <begin position="56"/>
        <end position="58"/>
    </location>
</feature>
<feature type="helix" evidence="16">
    <location>
        <begin position="61"/>
        <end position="73"/>
    </location>
</feature>
<feature type="strand" evidence="16">
    <location>
        <begin position="78"/>
        <end position="80"/>
    </location>
</feature>
<feature type="helix" evidence="16">
    <location>
        <begin position="85"/>
        <end position="88"/>
    </location>
</feature>
<feature type="helix" evidence="16">
    <location>
        <begin position="89"/>
        <end position="95"/>
    </location>
</feature>
<feature type="strand" evidence="16">
    <location>
        <begin position="109"/>
        <end position="114"/>
    </location>
</feature>
<feature type="turn" evidence="16">
    <location>
        <begin position="117"/>
        <end position="120"/>
    </location>
</feature>
<feature type="helix" evidence="16">
    <location>
        <begin position="124"/>
        <end position="137"/>
    </location>
</feature>
<feature type="strand" evidence="16">
    <location>
        <begin position="143"/>
        <end position="148"/>
    </location>
</feature>
<feature type="helix" evidence="16">
    <location>
        <begin position="157"/>
        <end position="169"/>
    </location>
</feature>
<feature type="strand" evidence="16">
    <location>
        <begin position="172"/>
        <end position="180"/>
    </location>
</feature>
<feature type="helix" evidence="16">
    <location>
        <begin position="183"/>
        <end position="196"/>
    </location>
</feature>
<feature type="strand" evidence="16">
    <location>
        <begin position="201"/>
        <end position="207"/>
    </location>
</feature>
<feature type="helix" evidence="16">
    <location>
        <begin position="214"/>
        <end position="216"/>
    </location>
</feature>
<feature type="helix" evidence="16">
    <location>
        <begin position="219"/>
        <end position="226"/>
    </location>
</feature>
<feature type="strand" evidence="16">
    <location>
        <begin position="229"/>
        <end position="233"/>
    </location>
</feature>
<feature type="helix" evidence="16">
    <location>
        <begin position="237"/>
        <end position="242"/>
    </location>
</feature>
<feature type="helix" evidence="16">
    <location>
        <begin position="247"/>
        <end position="250"/>
    </location>
</feature>
<feature type="turn" evidence="16">
    <location>
        <begin position="251"/>
        <end position="253"/>
    </location>
</feature>
<feature type="strand" evidence="16">
    <location>
        <begin position="260"/>
        <end position="262"/>
    </location>
</feature>
<feature type="helix" evidence="16">
    <location>
        <begin position="265"/>
        <end position="272"/>
    </location>
</feature>
<feature type="helix" evidence="16">
    <location>
        <begin position="275"/>
        <end position="292"/>
    </location>
</feature>
<feature type="helix" evidence="16">
    <location>
        <begin position="293"/>
        <end position="295"/>
    </location>
</feature>
<feature type="helix" evidence="16">
    <location>
        <begin position="299"/>
        <end position="309"/>
    </location>
</feature>
<feature type="helix" evidence="16">
    <location>
        <begin position="315"/>
        <end position="317"/>
    </location>
</feature>
<feature type="strand" evidence="16">
    <location>
        <begin position="320"/>
        <end position="323"/>
    </location>
</feature>
<feature type="helix" evidence="16">
    <location>
        <begin position="328"/>
        <end position="337"/>
    </location>
</feature>
<feature type="helix" evidence="16">
    <location>
        <begin position="345"/>
        <end position="358"/>
    </location>
</feature>
<feature type="helix" evidence="16">
    <location>
        <begin position="359"/>
        <end position="361"/>
    </location>
</feature>
<reference key="1">
    <citation type="journal article" date="2005" name="Science">
        <title>The transcriptional landscape of the mammalian genome.</title>
        <authorList>
            <person name="Carninci P."/>
            <person name="Kasukawa T."/>
            <person name="Katayama S."/>
            <person name="Gough J."/>
            <person name="Frith M.C."/>
            <person name="Maeda N."/>
            <person name="Oyama R."/>
            <person name="Ravasi T."/>
            <person name="Lenhard B."/>
            <person name="Wells C."/>
            <person name="Kodzius R."/>
            <person name="Shimokawa K."/>
            <person name="Bajic V.B."/>
            <person name="Brenner S.E."/>
            <person name="Batalov S."/>
            <person name="Forrest A.R."/>
            <person name="Zavolan M."/>
            <person name="Davis M.J."/>
            <person name="Wilming L.G."/>
            <person name="Aidinis V."/>
            <person name="Allen J.E."/>
            <person name="Ambesi-Impiombato A."/>
            <person name="Apweiler R."/>
            <person name="Aturaliya R.N."/>
            <person name="Bailey T.L."/>
            <person name="Bansal M."/>
            <person name="Baxter L."/>
            <person name="Beisel K.W."/>
            <person name="Bersano T."/>
            <person name="Bono H."/>
            <person name="Chalk A.M."/>
            <person name="Chiu K.P."/>
            <person name="Choudhary V."/>
            <person name="Christoffels A."/>
            <person name="Clutterbuck D.R."/>
            <person name="Crowe M.L."/>
            <person name="Dalla E."/>
            <person name="Dalrymple B.P."/>
            <person name="de Bono B."/>
            <person name="Della Gatta G."/>
            <person name="di Bernardo D."/>
            <person name="Down T."/>
            <person name="Engstrom P."/>
            <person name="Fagiolini M."/>
            <person name="Faulkner G."/>
            <person name="Fletcher C.F."/>
            <person name="Fukushima T."/>
            <person name="Furuno M."/>
            <person name="Futaki S."/>
            <person name="Gariboldi M."/>
            <person name="Georgii-Hemming P."/>
            <person name="Gingeras T.R."/>
            <person name="Gojobori T."/>
            <person name="Green R.E."/>
            <person name="Gustincich S."/>
            <person name="Harbers M."/>
            <person name="Hayashi Y."/>
            <person name="Hensch T.K."/>
            <person name="Hirokawa N."/>
            <person name="Hill D."/>
            <person name="Huminiecki L."/>
            <person name="Iacono M."/>
            <person name="Ikeo K."/>
            <person name="Iwama A."/>
            <person name="Ishikawa T."/>
            <person name="Jakt M."/>
            <person name="Kanapin A."/>
            <person name="Katoh M."/>
            <person name="Kawasawa Y."/>
            <person name="Kelso J."/>
            <person name="Kitamura H."/>
            <person name="Kitano H."/>
            <person name="Kollias G."/>
            <person name="Krishnan S.P."/>
            <person name="Kruger A."/>
            <person name="Kummerfeld S.K."/>
            <person name="Kurochkin I.V."/>
            <person name="Lareau L.F."/>
            <person name="Lazarevic D."/>
            <person name="Lipovich L."/>
            <person name="Liu J."/>
            <person name="Liuni S."/>
            <person name="McWilliam S."/>
            <person name="Madan Babu M."/>
            <person name="Madera M."/>
            <person name="Marchionni L."/>
            <person name="Matsuda H."/>
            <person name="Matsuzawa S."/>
            <person name="Miki H."/>
            <person name="Mignone F."/>
            <person name="Miyake S."/>
            <person name="Morris K."/>
            <person name="Mottagui-Tabar S."/>
            <person name="Mulder N."/>
            <person name="Nakano N."/>
            <person name="Nakauchi H."/>
            <person name="Ng P."/>
            <person name="Nilsson R."/>
            <person name="Nishiguchi S."/>
            <person name="Nishikawa S."/>
            <person name="Nori F."/>
            <person name="Ohara O."/>
            <person name="Okazaki Y."/>
            <person name="Orlando V."/>
            <person name="Pang K.C."/>
            <person name="Pavan W.J."/>
            <person name="Pavesi G."/>
            <person name="Pesole G."/>
            <person name="Petrovsky N."/>
            <person name="Piazza S."/>
            <person name="Reed J."/>
            <person name="Reid J.F."/>
            <person name="Ring B.Z."/>
            <person name="Ringwald M."/>
            <person name="Rost B."/>
            <person name="Ruan Y."/>
            <person name="Salzberg S.L."/>
            <person name="Sandelin A."/>
            <person name="Schneider C."/>
            <person name="Schoenbach C."/>
            <person name="Sekiguchi K."/>
            <person name="Semple C.A."/>
            <person name="Seno S."/>
            <person name="Sessa L."/>
            <person name="Sheng Y."/>
            <person name="Shibata Y."/>
            <person name="Shimada H."/>
            <person name="Shimada K."/>
            <person name="Silva D."/>
            <person name="Sinclair B."/>
            <person name="Sperling S."/>
            <person name="Stupka E."/>
            <person name="Sugiura K."/>
            <person name="Sultana R."/>
            <person name="Takenaka Y."/>
            <person name="Taki K."/>
            <person name="Tammoja K."/>
            <person name="Tan S.L."/>
            <person name="Tang S."/>
            <person name="Taylor M.S."/>
            <person name="Tegner J."/>
            <person name="Teichmann S.A."/>
            <person name="Ueda H.R."/>
            <person name="van Nimwegen E."/>
            <person name="Verardo R."/>
            <person name="Wei C.L."/>
            <person name="Yagi K."/>
            <person name="Yamanishi H."/>
            <person name="Zabarovsky E."/>
            <person name="Zhu S."/>
            <person name="Zimmer A."/>
            <person name="Hide W."/>
            <person name="Bult C."/>
            <person name="Grimmond S.M."/>
            <person name="Teasdale R.D."/>
            <person name="Liu E.T."/>
            <person name="Brusic V."/>
            <person name="Quackenbush J."/>
            <person name="Wahlestedt C."/>
            <person name="Mattick J.S."/>
            <person name="Hume D.A."/>
            <person name="Kai C."/>
            <person name="Sasaki D."/>
            <person name="Tomaru Y."/>
            <person name="Fukuda S."/>
            <person name="Kanamori-Katayama M."/>
            <person name="Suzuki M."/>
            <person name="Aoki J."/>
            <person name="Arakawa T."/>
            <person name="Iida J."/>
            <person name="Imamura K."/>
            <person name="Itoh M."/>
            <person name="Kato T."/>
            <person name="Kawaji H."/>
            <person name="Kawagashira N."/>
            <person name="Kawashima T."/>
            <person name="Kojima M."/>
            <person name="Kondo S."/>
            <person name="Konno H."/>
            <person name="Nakano K."/>
            <person name="Ninomiya N."/>
            <person name="Nishio T."/>
            <person name="Okada M."/>
            <person name="Plessy C."/>
            <person name="Shibata K."/>
            <person name="Shiraki T."/>
            <person name="Suzuki S."/>
            <person name="Tagami M."/>
            <person name="Waki K."/>
            <person name="Watahiki A."/>
            <person name="Okamura-Oho Y."/>
            <person name="Suzuki H."/>
            <person name="Kawai J."/>
            <person name="Hayashizaki Y."/>
        </authorList>
    </citation>
    <scope>NUCLEOTIDE SEQUENCE [LARGE SCALE MRNA]</scope>
    <source>
        <strain>C57BL/6J</strain>
        <tissue>Eye</tissue>
    </source>
</reference>
<reference key="2">
    <citation type="journal article" date="2009" name="PLoS Biol.">
        <title>Lineage-specific biology revealed by a finished genome assembly of the mouse.</title>
        <authorList>
            <person name="Church D.M."/>
            <person name="Goodstadt L."/>
            <person name="Hillier L.W."/>
            <person name="Zody M.C."/>
            <person name="Goldstein S."/>
            <person name="She X."/>
            <person name="Bult C.J."/>
            <person name="Agarwala R."/>
            <person name="Cherry J.L."/>
            <person name="DiCuccio M."/>
            <person name="Hlavina W."/>
            <person name="Kapustin Y."/>
            <person name="Meric P."/>
            <person name="Maglott D."/>
            <person name="Birtle Z."/>
            <person name="Marques A.C."/>
            <person name="Graves T."/>
            <person name="Zhou S."/>
            <person name="Teague B."/>
            <person name="Potamousis K."/>
            <person name="Churas C."/>
            <person name="Place M."/>
            <person name="Herschleb J."/>
            <person name="Runnheim R."/>
            <person name="Forrest D."/>
            <person name="Amos-Landgraf J."/>
            <person name="Schwartz D.C."/>
            <person name="Cheng Z."/>
            <person name="Lindblad-Toh K."/>
            <person name="Eichler E.E."/>
            <person name="Ponting C.P."/>
        </authorList>
    </citation>
    <scope>NUCLEOTIDE SEQUENCE [LARGE SCALE GENOMIC DNA]</scope>
    <source>
        <strain>C57BL/6J</strain>
    </source>
</reference>
<reference evidence="8 9" key="3">
    <citation type="journal article" date="2004" name="Genome Res.">
        <title>The status, quality, and expansion of the NIH full-length cDNA project: the Mammalian Gene Collection (MGC).</title>
        <authorList>
            <consortium name="The MGC Project Team"/>
        </authorList>
    </citation>
    <scope>NUCLEOTIDE SEQUENCE [LARGE SCALE MRNA] OF 5-367</scope>
    <source>
        <strain>FVB/N</strain>
        <tissue evidence="9">Liver</tissue>
    </source>
</reference>
<reference evidence="8 10" key="4">
    <citation type="journal article" date="2003" name="Oncogene">
        <title>Aflatoxin B1 aldehyde reductase (AFAR) genes cluster at 1p35-1p36.1 in a region frequently altered in human tumour cells.</title>
        <authorList>
            <person name="Praml C."/>
            <person name="Savelyeva L."/>
            <person name="Schwab M."/>
        </authorList>
    </citation>
    <scope>NUCLEOTIDE SEQUENCE [MRNA] OF 25-367</scope>
    <source>
        <strain evidence="10">BALB/cJ</strain>
    </source>
</reference>
<reference evidence="8" key="5">
    <citation type="journal article" date="2002" name="FEBS Lett.">
        <title>Characterisation of a novel mouse liver aldo-keto reductase AKR7A5.</title>
        <authorList>
            <person name="Hinshelwood A."/>
            <person name="McGarvie G."/>
            <person name="Ellis E."/>
        </authorList>
    </citation>
    <scope>NUCLEOTIDE SEQUENCE [MRNA] OF 30-367</scope>
    <scope>TISSUE SPECIFICITY</scope>
    <source>
        <strain>CD-1</strain>
        <tissue>Liver</tissue>
    </source>
</reference>
<reference evidence="8" key="6">
    <citation type="submission" date="2004-08" db="EMBL/GenBank/DDBJ databases">
        <authorList>
            <person name="Ellis E.M."/>
            <person name="Hinshelwood A."/>
            <person name="McGarvie G."/>
        </authorList>
    </citation>
    <scope>SEQUENCE REVISION TO 127 AND 162</scope>
</reference>
<reference evidence="8 11" key="7">
    <citation type="journal article" date="2002" name="Biochem. J.">
        <title>Novel homodimeric and heterodimeric rat gamma-hydroxybutyrate synthases that associate with the Golgi apparatus define a distinct subclass of aldo-keto reductase 7 family proteins.</title>
        <authorList>
            <person name="Kelly V.P."/>
            <person name="Sherratt P.J."/>
            <person name="Crouch D.H."/>
            <person name="Hayes J.D."/>
        </authorList>
    </citation>
    <scope>GENE STRUCTURE</scope>
</reference>
<reference key="8">
    <citation type="journal article" date="2007" name="Proc. Natl. Acad. Sci. U.S.A.">
        <title>Large-scale phosphorylation analysis of mouse liver.</title>
        <authorList>
            <person name="Villen J."/>
            <person name="Beausoleil S.A."/>
            <person name="Gerber S.A."/>
            <person name="Gygi S.P."/>
        </authorList>
    </citation>
    <scope>IDENTIFICATION BY MASS SPECTROMETRY [LARGE SCALE ANALYSIS]</scope>
    <source>
        <tissue>Liver</tissue>
    </source>
</reference>
<reference key="9">
    <citation type="journal article" date="2010" name="Cell">
        <title>A tissue-specific atlas of mouse protein phosphorylation and expression.</title>
        <authorList>
            <person name="Huttlin E.L."/>
            <person name="Jedrychowski M.P."/>
            <person name="Elias J.E."/>
            <person name="Goswami T."/>
            <person name="Rad R."/>
            <person name="Beausoleil S.A."/>
            <person name="Villen J."/>
            <person name="Haas W."/>
            <person name="Sowa M.E."/>
            <person name="Gygi S.P."/>
        </authorList>
    </citation>
    <scope>PHOSPHORYLATION [LARGE SCALE ANALYSIS] AT SER-40 AND THR-48</scope>
    <scope>IDENTIFICATION BY MASS SPECTROMETRY [LARGE SCALE ANALYSIS]</scope>
    <source>
        <tissue>Brain</tissue>
        <tissue>Brown adipose tissue</tissue>
        <tissue>Heart</tissue>
        <tissue>Kidney</tissue>
        <tissue>Liver</tissue>
        <tissue>Lung</tissue>
        <tissue>Pancreas</tissue>
        <tissue>Spleen</tissue>
        <tissue>Testis</tissue>
    </source>
</reference>
<reference key="10">
    <citation type="journal article" date="2013" name="Mol. Cell">
        <title>SIRT5-mediated lysine desuccinylation impacts diverse metabolic pathways.</title>
        <authorList>
            <person name="Park J."/>
            <person name="Chen Y."/>
            <person name="Tishkoff D.X."/>
            <person name="Peng C."/>
            <person name="Tan M."/>
            <person name="Dai L."/>
            <person name="Xie Z."/>
            <person name="Zhang Y."/>
            <person name="Zwaans B.M."/>
            <person name="Skinner M.E."/>
            <person name="Lombard D.B."/>
            <person name="Zhao Y."/>
        </authorList>
    </citation>
    <scope>SUCCINYLATION [LARGE SCALE ANALYSIS] AT LYS-244</scope>
    <scope>IDENTIFICATION BY MASS SPECTROMETRY [LARGE SCALE ANALYSIS]</scope>
    <source>
        <tissue>Liver</tissue>
    </source>
</reference>
<reference key="11">
    <citation type="journal article" date="2013" name="Proc. Natl. Acad. Sci. U.S.A.">
        <title>Label-free quantitative proteomics of the lysine acetylome in mitochondria identifies substrates of SIRT3 in metabolic pathways.</title>
        <authorList>
            <person name="Rardin M.J."/>
            <person name="Newman J.C."/>
            <person name="Held J.M."/>
            <person name="Cusack M.P."/>
            <person name="Sorensen D.J."/>
            <person name="Li B."/>
            <person name="Schilling B."/>
            <person name="Mooney S.D."/>
            <person name="Kahn C.R."/>
            <person name="Verdin E."/>
            <person name="Gibson B.W."/>
        </authorList>
    </citation>
    <scope>ACETYLATION [LARGE SCALE ANALYSIS] AT LYS-136</scope>
    <scope>IDENTIFICATION BY MASS SPECTROMETRY [LARGE SCALE ANALYSIS]</scope>
    <source>
        <tissue>Liver</tissue>
    </source>
</reference>
<reference key="12">
    <citation type="journal article" date="2006" name="Biochemistry">
        <title>Crystal structure of mouse succinic semialdehyde reductase AKR7A5: structural basis for substrate specificity.</title>
        <authorList>
            <person name="Zhu X."/>
            <person name="Lapthorn A.J."/>
            <person name="Ellis E.M."/>
        </authorList>
    </citation>
    <scope>X-RAY CRYSTALLOGRAPHY (2.3 ANGSTROMS) OF 30-367 IN COMPLEX WITH NADP AND THE INHIBITOR TARTRATE</scope>
    <scope>ACTIVITY REGULATION</scope>
    <scope>CATALYTIC ACTIVITY</scope>
    <scope>BIOPHYSICOCHEMICAL PROPERTIES</scope>
    <scope>FUNCTION</scope>
    <scope>SUBUNIT</scope>
</reference>
<protein>
    <recommendedName>
        <fullName>Aflatoxin B1 aldehyde reductase member 2</fullName>
        <ecNumber>1.1.1.n11</ecNumber>
    </recommendedName>
    <alternativeName>
        <fullName>Succinic semialdehyde reductase</fullName>
        <shortName>SSA reductase</shortName>
    </alternativeName>
</protein>
<keyword id="KW-0002">3D-structure</keyword>
<keyword id="KW-0007">Acetylation</keyword>
<keyword id="KW-0963">Cytoplasm</keyword>
<keyword id="KW-0333">Golgi apparatus</keyword>
<keyword id="KW-0443">Lipid metabolism</keyword>
<keyword id="KW-0496">Mitochondrion</keyword>
<keyword id="KW-0521">NADP</keyword>
<keyword id="KW-0560">Oxidoreductase</keyword>
<keyword id="KW-0597">Phosphoprotein</keyword>
<keyword id="KW-1185">Reference proteome</keyword>
<keyword id="KW-0809">Transit peptide</keyword>
<dbReference type="EC" id="1.1.1.n11"/>
<dbReference type="EMBL" id="AK143203">
    <property type="protein sequence ID" value="BAE25302.1"/>
    <property type="molecule type" value="mRNA"/>
</dbReference>
<dbReference type="EMBL" id="AL807811">
    <property type="status" value="NOT_ANNOTATED_CDS"/>
    <property type="molecule type" value="Genomic_DNA"/>
</dbReference>
<dbReference type="EMBL" id="BC031857">
    <property type="protein sequence ID" value="AAH31857.1"/>
    <property type="status" value="ALT_INIT"/>
    <property type="molecule type" value="mRNA"/>
</dbReference>
<dbReference type="EMBL" id="AJ271800">
    <property type="protein sequence ID" value="CAC81077.1"/>
    <property type="status" value="ALT_INIT"/>
    <property type="molecule type" value="mRNA"/>
</dbReference>
<dbReference type="EMBL" id="AJ271801">
    <property type="protein sequence ID" value="CAC81078.1"/>
    <property type="status" value="ALT_INIT"/>
    <property type="molecule type" value="mRNA"/>
</dbReference>
<dbReference type="EMBL" id="AF525358">
    <property type="protein sequence ID" value="AAO38437.2"/>
    <property type="molecule type" value="mRNA"/>
</dbReference>
<dbReference type="EMBL" id="BK000393">
    <property type="protein sequence ID" value="DAA00087.1"/>
    <property type="molecule type" value="mRNA"/>
</dbReference>
<dbReference type="CCDS" id="CCDS18844.1"/>
<dbReference type="RefSeq" id="NP_079613.3">
    <property type="nucleotide sequence ID" value="NM_025337.3"/>
</dbReference>
<dbReference type="PDB" id="2C91">
    <property type="method" value="X-ray"/>
    <property type="resolution" value="2.30 A"/>
    <property type="chains" value="A/B/C/D/E/F/G/H/I/J=30-367"/>
</dbReference>
<dbReference type="PDBsum" id="2C91"/>
<dbReference type="SMR" id="Q8CG76"/>
<dbReference type="BioGRID" id="225379">
    <property type="interactions" value="6"/>
</dbReference>
<dbReference type="FunCoup" id="Q8CG76">
    <property type="interactions" value="1414"/>
</dbReference>
<dbReference type="IntAct" id="Q8CG76">
    <property type="interactions" value="1"/>
</dbReference>
<dbReference type="STRING" id="10090.ENSMUSP00000073459"/>
<dbReference type="GlyGen" id="Q8CG76">
    <property type="glycosylation" value="1 site, 1 O-linked glycan (1 site)"/>
</dbReference>
<dbReference type="iPTMnet" id="Q8CG76"/>
<dbReference type="PhosphoSitePlus" id="Q8CG76"/>
<dbReference type="SwissPalm" id="Q8CG76"/>
<dbReference type="REPRODUCTION-2DPAGE" id="Q8CG76"/>
<dbReference type="jPOST" id="Q8CG76"/>
<dbReference type="PaxDb" id="10090-ENSMUSP00000073459"/>
<dbReference type="PeptideAtlas" id="Q8CG76"/>
<dbReference type="ProteomicsDB" id="265100"/>
<dbReference type="Pumba" id="Q8CG76"/>
<dbReference type="DNASU" id="110198"/>
<dbReference type="Ensembl" id="ENSMUST00000073787.7">
    <property type="protein sequence ID" value="ENSMUSP00000073459.7"/>
    <property type="gene ID" value="ENSMUSG00000028743.8"/>
</dbReference>
<dbReference type="GeneID" id="110198"/>
<dbReference type="KEGG" id="mmu:110198"/>
<dbReference type="UCSC" id="uc008vmc.2">
    <property type="organism name" value="mouse"/>
</dbReference>
<dbReference type="AGR" id="MGI:107796"/>
<dbReference type="CTD" id="110198"/>
<dbReference type="MGI" id="MGI:107796">
    <property type="gene designation" value="Akr7a5"/>
</dbReference>
<dbReference type="VEuPathDB" id="HostDB:ENSMUSG00000028743"/>
<dbReference type="eggNOG" id="ENOG502QU2T">
    <property type="taxonomic scope" value="Eukaryota"/>
</dbReference>
<dbReference type="GeneTree" id="ENSGT00940000158496"/>
<dbReference type="HOGENOM" id="CLU_023205_1_1_1"/>
<dbReference type="InParanoid" id="Q8CG76"/>
<dbReference type="OMA" id="TAPNYWH"/>
<dbReference type="OrthoDB" id="48988at2759"/>
<dbReference type="PhylomeDB" id="Q8CG76"/>
<dbReference type="TreeFam" id="TF329173"/>
<dbReference type="Reactome" id="R-MMU-5423646">
    <property type="pathway name" value="Aflatoxin activation and detoxification"/>
</dbReference>
<dbReference type="SABIO-RK" id="Q8CG76"/>
<dbReference type="BioGRID-ORCS" id="110198">
    <property type="hits" value="3 hits in 80 CRISPR screens"/>
</dbReference>
<dbReference type="ChiTaRS" id="Akr7a5">
    <property type="organism name" value="mouse"/>
</dbReference>
<dbReference type="EvolutionaryTrace" id="Q8CG76"/>
<dbReference type="PRO" id="PR:Q8CG76"/>
<dbReference type="Proteomes" id="UP000000589">
    <property type="component" value="Chromosome 4"/>
</dbReference>
<dbReference type="RNAct" id="Q8CG76">
    <property type="molecule type" value="protein"/>
</dbReference>
<dbReference type="Bgee" id="ENSMUSG00000028743">
    <property type="expression patterns" value="Expressed in right kidney and 259 other cell types or tissues"/>
</dbReference>
<dbReference type="GO" id="GO:0005794">
    <property type="term" value="C:Golgi apparatus"/>
    <property type="evidence" value="ECO:0007669"/>
    <property type="project" value="UniProtKB-SubCell"/>
</dbReference>
<dbReference type="GO" id="GO:0005739">
    <property type="term" value="C:mitochondrion"/>
    <property type="evidence" value="ECO:0007005"/>
    <property type="project" value="MGI"/>
</dbReference>
<dbReference type="GO" id="GO:0005635">
    <property type="term" value="C:nuclear envelope"/>
    <property type="evidence" value="ECO:0007669"/>
    <property type="project" value="Ensembl"/>
</dbReference>
<dbReference type="GO" id="GO:0004032">
    <property type="term" value="F:aldose reductase (NADPH) activity"/>
    <property type="evidence" value="ECO:0007669"/>
    <property type="project" value="Ensembl"/>
</dbReference>
<dbReference type="GO" id="GO:0006629">
    <property type="term" value="P:lipid metabolic process"/>
    <property type="evidence" value="ECO:0007669"/>
    <property type="project" value="UniProtKB-KW"/>
</dbReference>
<dbReference type="CDD" id="cd19075">
    <property type="entry name" value="AKR_AKR7A1-5"/>
    <property type="match status" value="1"/>
</dbReference>
<dbReference type="FunFam" id="3.20.20.100:FF:000017">
    <property type="entry name" value="Aflatoxin B1 aldehyde reductase member 2"/>
    <property type="match status" value="1"/>
</dbReference>
<dbReference type="Gene3D" id="3.20.20.100">
    <property type="entry name" value="NADP-dependent oxidoreductase domain"/>
    <property type="match status" value="1"/>
</dbReference>
<dbReference type="InterPro" id="IPR050523">
    <property type="entry name" value="AKR_Detox_Biosynth"/>
</dbReference>
<dbReference type="InterPro" id="IPR023210">
    <property type="entry name" value="NADP_OxRdtase_dom"/>
</dbReference>
<dbReference type="InterPro" id="IPR036812">
    <property type="entry name" value="NADP_OxRdtase_dom_sf"/>
</dbReference>
<dbReference type="PANTHER" id="PTHR43364:SF4">
    <property type="entry name" value="NAD(P)-LINKED OXIDOREDUCTASE SUPERFAMILY PROTEIN"/>
    <property type="match status" value="1"/>
</dbReference>
<dbReference type="PANTHER" id="PTHR43364">
    <property type="entry name" value="NADH-SPECIFIC METHYLGLYOXAL REDUCTASE-RELATED"/>
    <property type="match status" value="1"/>
</dbReference>
<dbReference type="Pfam" id="PF00248">
    <property type="entry name" value="Aldo_ket_red"/>
    <property type="match status" value="1"/>
</dbReference>
<dbReference type="SUPFAM" id="SSF51430">
    <property type="entry name" value="NAD(P)-linked oxidoreductase"/>
    <property type="match status" value="1"/>
</dbReference>
<proteinExistence type="evidence at protein level"/>
<evidence type="ECO:0000250" key="1"/>
<evidence type="ECO:0000250" key="2">
    <source>
        <dbReference type="UniProtKB" id="O43488"/>
    </source>
</evidence>
<evidence type="ECO:0000250" key="3">
    <source>
        <dbReference type="UniProtKB" id="Q8CG45"/>
    </source>
</evidence>
<evidence type="ECO:0000255" key="4"/>
<evidence type="ECO:0000256" key="5">
    <source>
        <dbReference type="SAM" id="MobiDB-lite"/>
    </source>
</evidence>
<evidence type="ECO:0000269" key="6">
    <source>
    </source>
</evidence>
<evidence type="ECO:0000269" key="7">
    <source>
    </source>
</evidence>
<evidence type="ECO:0000305" key="8"/>
<evidence type="ECO:0000312" key="9">
    <source>
        <dbReference type="EMBL" id="AAH31857.1"/>
    </source>
</evidence>
<evidence type="ECO:0000312" key="10">
    <source>
        <dbReference type="EMBL" id="CAC81078.1"/>
    </source>
</evidence>
<evidence type="ECO:0000312" key="11">
    <source>
        <dbReference type="EMBL" id="DAA00087.1"/>
    </source>
</evidence>
<evidence type="ECO:0000312" key="12">
    <source>
        <dbReference type="MGI" id="MGI:107796"/>
    </source>
</evidence>
<evidence type="ECO:0007744" key="13">
    <source>
    </source>
</evidence>
<evidence type="ECO:0007744" key="14">
    <source>
    </source>
</evidence>
<evidence type="ECO:0007744" key="15">
    <source>
    </source>
</evidence>
<evidence type="ECO:0007829" key="16">
    <source>
        <dbReference type="PDB" id="2C91"/>
    </source>
</evidence>
<organism>
    <name type="scientific">Mus musculus</name>
    <name type="common">Mouse</name>
    <dbReference type="NCBI Taxonomy" id="10090"/>
    <lineage>
        <taxon>Eukaryota</taxon>
        <taxon>Metazoa</taxon>
        <taxon>Chordata</taxon>
        <taxon>Craniata</taxon>
        <taxon>Vertebrata</taxon>
        <taxon>Euteleostomi</taxon>
        <taxon>Mammalia</taxon>
        <taxon>Eutheria</taxon>
        <taxon>Euarchontoglires</taxon>
        <taxon>Glires</taxon>
        <taxon>Rodentia</taxon>
        <taxon>Myomorpha</taxon>
        <taxon>Muroidea</taxon>
        <taxon>Muridae</taxon>
        <taxon>Murinae</taxon>
        <taxon>Mus</taxon>
        <taxon>Mus</taxon>
    </lineage>
</organism>
<accession>Q8CG76</accession>
<accession>A2AMV3</accession>
<accession>Q3UPU2</accession>
<accession>Q8CG77</accession>
<accession>Q8JZQ8</accession>
<accession>Q9D157</accession>